<comment type="function">
    <text evidence="3 4 6 7 8">Catalyzes the two serial methylation steps for the conversion of the 7-monomethylguanosine (m(7)G) caps of snRNAs and snoRNAs to a 2,2,7-trimethylguanosine (m(2,2,7)G) cap structure. The enzyme is specific for guanine, and N7 methylation must precede N2 methylation. Hypermethylates the m3G cap on TLC1 telomerase which affects telomere silencing and telomere length regulation. Required for pre-mRNA splicing, pre-rRNA processing and small ribosomal subunit synthesis. Involved in nucleolar structural organization.</text>
</comment>
<comment type="catalytic activity">
    <reaction evidence="7">
        <text>a 5'-end (N(7)-methyl 5'-triphosphoguanosine)-ribonucleoside in snRNA + S-adenosyl-L-methionine = a 5'-end (N(2),N(7)-dimethyl 5'-triphosphoguanosine)-ribonucleoside in snRNA + S-adenosyl-L-homocysteine + H(+)</text>
        <dbReference type="Rhea" id="RHEA:78471"/>
        <dbReference type="Rhea" id="RHEA-COMP:19085"/>
        <dbReference type="Rhea" id="RHEA-COMP:19087"/>
        <dbReference type="ChEBI" id="CHEBI:15378"/>
        <dbReference type="ChEBI" id="CHEBI:57856"/>
        <dbReference type="ChEBI" id="CHEBI:59789"/>
        <dbReference type="ChEBI" id="CHEBI:156461"/>
        <dbReference type="ChEBI" id="CHEBI:172880"/>
    </reaction>
    <physiologicalReaction direction="left-to-right" evidence="7">
        <dbReference type="Rhea" id="RHEA:78472"/>
    </physiologicalReaction>
</comment>
<comment type="catalytic activity">
    <reaction evidence="7">
        <text>a 5'-end (N(7)-methyl 5'-triphosphoguanosine)-ribonucleoside in snoRNA + S-adenosyl-L-methionine = a 5'-end (N(2),N(7)-dimethyl 5'-triphosphoguanosine)-ribonucleoside in snoRNA + S-adenosyl-L-homocysteine + H(+)</text>
        <dbReference type="Rhea" id="RHEA:78475"/>
        <dbReference type="Rhea" id="RHEA-COMP:19086"/>
        <dbReference type="Rhea" id="RHEA-COMP:19088"/>
        <dbReference type="ChEBI" id="CHEBI:15378"/>
        <dbReference type="ChEBI" id="CHEBI:57856"/>
        <dbReference type="ChEBI" id="CHEBI:59789"/>
        <dbReference type="ChEBI" id="CHEBI:156461"/>
        <dbReference type="ChEBI" id="CHEBI:172880"/>
    </reaction>
    <physiologicalReaction direction="left-to-right" evidence="7">
        <dbReference type="Rhea" id="RHEA:78476"/>
    </physiologicalReaction>
</comment>
<comment type="catalytic activity">
    <reaction evidence="7">
        <text>a 5'-end (N(2),N(7)-dimethyl 5'-triphosphoguanosine)-ribonucleoside in snRNA + S-adenosyl-L-methionine = a 5'-end (N(2),N(2),N(7)-trimethyl 5'-triphosphoguanosine)-ribonucleoside in snRNA + S-adenosyl-L-homocysteine + H(+)</text>
        <dbReference type="Rhea" id="RHEA:78479"/>
        <dbReference type="Rhea" id="RHEA-COMP:19087"/>
        <dbReference type="Rhea" id="RHEA-COMP:19089"/>
        <dbReference type="ChEBI" id="CHEBI:15378"/>
        <dbReference type="ChEBI" id="CHEBI:57856"/>
        <dbReference type="ChEBI" id="CHEBI:59789"/>
        <dbReference type="ChEBI" id="CHEBI:167623"/>
        <dbReference type="ChEBI" id="CHEBI:172880"/>
    </reaction>
    <physiologicalReaction direction="left-to-right" evidence="7">
        <dbReference type="Rhea" id="RHEA:78480"/>
    </physiologicalReaction>
</comment>
<comment type="catalytic activity">
    <reaction evidence="7">
        <text>a 5'-end (N(2),N(7)-dimethyl 5'-triphosphoguanosine)-ribonucleoside in snoRNA + S-adenosyl-L-methionine = a 5'-end (N(2),N(2),N(7)-trimethyl 5'-triphosphoguanosine)-ribonucleoside in snoRNA + S-adenosyl-L-homocysteine + H(+)</text>
        <dbReference type="Rhea" id="RHEA:78507"/>
        <dbReference type="Rhea" id="RHEA-COMP:19088"/>
        <dbReference type="Rhea" id="RHEA-COMP:19090"/>
        <dbReference type="ChEBI" id="CHEBI:15378"/>
        <dbReference type="ChEBI" id="CHEBI:57856"/>
        <dbReference type="ChEBI" id="CHEBI:59789"/>
        <dbReference type="ChEBI" id="CHEBI:167623"/>
        <dbReference type="ChEBI" id="CHEBI:172880"/>
    </reaction>
    <physiologicalReaction direction="left-to-right" evidence="7">
        <dbReference type="Rhea" id="RHEA:78508"/>
    </physiologicalReaction>
</comment>
<comment type="activity regulation">
    <text evidence="1">Substrate inhibited by S-adenosyl-L-homocysteine.</text>
</comment>
<comment type="subunit">
    <text evidence="1 3">Monomer (By similarity). Interacts with the spliceosomal snRNP core component SMB1 and the snoRNP components CBF5 and NOP58.</text>
</comment>
<comment type="interaction">
    <interactant intactId="EBI-30910">
        <id>Q12052</id>
    </interactant>
    <interactant intactId="EBI-28438">
        <id>P40342</id>
        <label>SWM2</label>
    </interactant>
    <organismsDiffer>false</organismsDiffer>
    <experiments>6</experiments>
</comment>
<comment type="subcellular location">
    <subcellularLocation>
        <location evidence="3 5">Nucleus</location>
        <location evidence="3 5">Nucleolus</location>
    </subcellularLocation>
</comment>
<comment type="similarity">
    <text evidence="9">Belongs to the methyltransferase superfamily. Trimethylguanosine synthase family.</text>
</comment>
<name>TGS1_YEAST</name>
<evidence type="ECO:0000250" key="1"/>
<evidence type="ECO:0000256" key="2">
    <source>
        <dbReference type="SAM" id="MobiDB-lite"/>
    </source>
</evidence>
<evidence type="ECO:0000269" key="3">
    <source>
    </source>
</evidence>
<evidence type="ECO:0000269" key="4">
    <source>
    </source>
</evidence>
<evidence type="ECO:0000269" key="5">
    <source>
    </source>
</evidence>
<evidence type="ECO:0000269" key="6">
    <source>
    </source>
</evidence>
<evidence type="ECO:0000269" key="7">
    <source>
    </source>
</evidence>
<evidence type="ECO:0000269" key="8">
    <source>
    </source>
</evidence>
<evidence type="ECO:0000305" key="9"/>
<feature type="chain" id="PRO_0000270619" description="Trimethylguanosine synthase">
    <location>
        <begin position="1"/>
        <end position="315"/>
    </location>
</feature>
<feature type="region of interest" description="Required for correct nucleolar localization">
    <location>
        <begin position="1"/>
        <end position="58"/>
    </location>
</feature>
<feature type="region of interest" description="Disordered" evidence="2">
    <location>
        <begin position="271"/>
        <end position="315"/>
    </location>
</feature>
<feature type="compositionally biased region" description="Basic and acidic residues" evidence="2">
    <location>
        <begin position="273"/>
        <end position="284"/>
    </location>
</feature>
<feature type="binding site" evidence="9">
    <location>
        <position position="126"/>
    </location>
    <ligand>
        <name>S-adenosyl-L-methionine</name>
        <dbReference type="ChEBI" id="CHEBI:59789"/>
    </ligand>
</feature>
<feature type="mutagenesis site" description="No effect." evidence="4">
    <original>W</original>
    <variation>A</variation>
    <location>
        <position position="75"/>
    </location>
</feature>
<feature type="mutagenesis site" description="No effect." evidence="4">
    <original>E</original>
    <variation>A</variation>
    <location>
        <position position="81"/>
    </location>
</feature>
<feature type="mutagenesis site" description="Loss of function." evidence="4">
    <original>I</original>
    <variation>R</variation>
    <location>
        <position position="83"/>
    </location>
</feature>
<feature type="mutagenesis site" description="Loss of catalytic activity, but not required for pre-rRNA processing." evidence="3 6">
    <original>D</original>
    <variation>A</variation>
    <location>
        <position position="103"/>
    </location>
</feature>
<feature type="mutagenesis site" description="Loss of function." evidence="3">
    <original>D</original>
    <variation>A</variation>
    <location>
        <position position="126"/>
    </location>
</feature>
<feature type="mutagenesis site" description="No effect." evidence="4">
    <original>S</original>
    <variation>A</variation>
    <location>
        <position position="175"/>
    </location>
</feature>
<feature type="mutagenesis site" description="Loss of function." evidence="4">
    <original>S</original>
    <variation>E</variation>
    <variation>R</variation>
    <location>
        <position position="175"/>
    </location>
</feature>
<feature type="mutagenesis site" description="Loss of catalytic activity, but not required for pre-rRNA processing." evidence="4 6 8">
    <original>W</original>
    <variation>A</variation>
    <location>
        <position position="178"/>
    </location>
</feature>
<reference key="1">
    <citation type="journal article" date="1996" name="Yeast">
        <title>The sequence of 55 kb on the left arm of yeast chromosome XVI identifies a small nuclear RNA, a new putative protein kinase and two new putative regulators.</title>
        <authorList>
            <person name="Purnelle B."/>
            <person name="Coster F."/>
            <person name="Goffeau A."/>
        </authorList>
    </citation>
    <scope>NUCLEOTIDE SEQUENCE [GENOMIC DNA]</scope>
    <source>
        <strain>ATCC 204511 / S288c / AB972</strain>
    </source>
</reference>
<reference key="2">
    <citation type="journal article" date="1997" name="Nature">
        <title>The nucleotide sequence of Saccharomyces cerevisiae chromosome XVI.</title>
        <authorList>
            <person name="Bussey H."/>
            <person name="Storms R.K."/>
            <person name="Ahmed A."/>
            <person name="Albermann K."/>
            <person name="Allen E."/>
            <person name="Ansorge W."/>
            <person name="Araujo R."/>
            <person name="Aparicio A."/>
            <person name="Barrell B.G."/>
            <person name="Badcock K."/>
            <person name="Benes V."/>
            <person name="Botstein D."/>
            <person name="Bowman S."/>
            <person name="Brueckner M."/>
            <person name="Carpenter J."/>
            <person name="Cherry J.M."/>
            <person name="Chung E."/>
            <person name="Churcher C.M."/>
            <person name="Coster F."/>
            <person name="Davis K."/>
            <person name="Davis R.W."/>
            <person name="Dietrich F.S."/>
            <person name="Delius H."/>
            <person name="DiPaolo T."/>
            <person name="Dubois E."/>
            <person name="Duesterhoeft A."/>
            <person name="Duncan M."/>
            <person name="Floeth M."/>
            <person name="Fortin N."/>
            <person name="Friesen J.D."/>
            <person name="Fritz C."/>
            <person name="Goffeau A."/>
            <person name="Hall J."/>
            <person name="Hebling U."/>
            <person name="Heumann K."/>
            <person name="Hilbert H."/>
            <person name="Hillier L.W."/>
            <person name="Hunicke-Smith S."/>
            <person name="Hyman R.W."/>
            <person name="Johnston M."/>
            <person name="Kalman S."/>
            <person name="Kleine K."/>
            <person name="Komp C."/>
            <person name="Kurdi O."/>
            <person name="Lashkari D."/>
            <person name="Lew H."/>
            <person name="Lin A."/>
            <person name="Lin D."/>
            <person name="Louis E.J."/>
            <person name="Marathe R."/>
            <person name="Messenguy F."/>
            <person name="Mewes H.-W."/>
            <person name="Mirtipati S."/>
            <person name="Moestl D."/>
            <person name="Mueller-Auer S."/>
            <person name="Namath A."/>
            <person name="Nentwich U."/>
            <person name="Oefner P."/>
            <person name="Pearson D."/>
            <person name="Petel F.X."/>
            <person name="Pohl T.M."/>
            <person name="Purnelle B."/>
            <person name="Rajandream M.A."/>
            <person name="Rechmann S."/>
            <person name="Rieger M."/>
            <person name="Riles L."/>
            <person name="Roberts D."/>
            <person name="Schaefer M."/>
            <person name="Scharfe M."/>
            <person name="Scherens B."/>
            <person name="Schramm S."/>
            <person name="Schroeder M."/>
            <person name="Sdicu A.-M."/>
            <person name="Tettelin H."/>
            <person name="Urrestarazu L.A."/>
            <person name="Ushinsky S."/>
            <person name="Vierendeels F."/>
            <person name="Vissers S."/>
            <person name="Voss H."/>
            <person name="Walsh S.V."/>
            <person name="Wambutt R."/>
            <person name="Wang Y."/>
            <person name="Wedler E."/>
            <person name="Wedler H."/>
            <person name="Winnett E."/>
            <person name="Zhong W.-W."/>
            <person name="Zollner A."/>
            <person name="Vo D.H."/>
            <person name="Hani J."/>
        </authorList>
    </citation>
    <scope>NUCLEOTIDE SEQUENCE [LARGE SCALE GENOMIC DNA]</scope>
    <source>
        <strain>ATCC 204508 / S288c</strain>
    </source>
</reference>
<reference key="3">
    <citation type="journal article" date="2014" name="G3 (Bethesda)">
        <title>The reference genome sequence of Saccharomyces cerevisiae: Then and now.</title>
        <authorList>
            <person name="Engel S.R."/>
            <person name="Dietrich F.S."/>
            <person name="Fisk D.G."/>
            <person name="Binkley G."/>
            <person name="Balakrishnan R."/>
            <person name="Costanzo M.C."/>
            <person name="Dwight S.S."/>
            <person name="Hitz B.C."/>
            <person name="Karra K."/>
            <person name="Nash R.S."/>
            <person name="Weng S."/>
            <person name="Wong E.D."/>
            <person name="Lloyd P."/>
            <person name="Skrzypek M.S."/>
            <person name="Miyasato S.R."/>
            <person name="Simison M."/>
            <person name="Cherry J.M."/>
        </authorList>
    </citation>
    <scope>GENOME REANNOTATION</scope>
    <source>
        <strain>ATCC 204508 / S288c</strain>
    </source>
</reference>
<reference key="4">
    <citation type="journal article" date="2002" name="Mol. Cell">
        <title>Hypermethylation of the cap structure of both yeast snRNAs and snoRNAs requires a conserved methyltransferase that is localized to the nucleolus.</title>
        <authorList>
            <person name="Mouaikel J."/>
            <person name="Verheggen C."/>
            <person name="Bertrand E."/>
            <person name="Tazi J."/>
            <person name="Bordonne R."/>
        </authorList>
    </citation>
    <scope>FUNCTION</scope>
    <scope>SUBCELLULAR LOCATION</scope>
    <scope>INTERACTION WITH CBF5; NOP58 AND SMB1</scope>
    <scope>MUTAGENESIS OF ASP-103 AND ASP-126</scope>
</reference>
<reference key="5">
    <citation type="journal article" date="2003" name="Nature">
        <title>Global analysis of protein localization in budding yeast.</title>
        <authorList>
            <person name="Huh W.-K."/>
            <person name="Falvo J.V."/>
            <person name="Gerke L.C."/>
            <person name="Carroll A.S."/>
            <person name="Howson R.W."/>
            <person name="Weissman J.S."/>
            <person name="O'Shea E.K."/>
        </authorList>
    </citation>
    <scope>SUBCELLULAR LOCATION [LARGE SCALE ANALYSIS]</scope>
</reference>
<reference key="6">
    <citation type="journal article" date="2003" name="Nucleic Acids Res.">
        <title>Sequence-structure-function relationships of Tgs1, the yeast snRNA/snoRNA cap hypermethylase.</title>
        <authorList>
            <person name="Mouaikel J."/>
            <person name="Bujnicki J.M."/>
            <person name="Tazi J."/>
            <person name="Bordonne R."/>
        </authorList>
    </citation>
    <scope>FUNCTION</scope>
    <scope>MUTAGENESIS OF TRP-75; GLU-81; ILE-83; SER-175 AND TRP-178</scope>
</reference>
<reference key="7">
    <citation type="journal article" date="2004" name="Mol. Cell. Biol.">
        <title>The small nucle(ol)ar RNA cap trimethyltransferase is required for ribosome synthesis and intact nucleolar morphology.</title>
        <authorList>
            <person name="Colau G."/>
            <person name="Thiry M."/>
            <person name="Leduc V."/>
            <person name="Bordonne R."/>
            <person name="Lafontaine D.L.J."/>
        </authorList>
    </citation>
    <scope>FUNCTION</scope>
    <scope>MUTAGENESIS OF ASP-103 AND TRP-178</scope>
</reference>
<reference key="8">
    <citation type="journal article" date="2008" name="J. Biol. Chem.">
        <title>Genetic and biochemical analysis of yeast and human cap trimethylguanosine synthase: functional overlap of 2,2,7-trimethylguanosine caps, small nuclear ribonucleoprotein components, pre-mRNA splicing factors, and RNA decay pathways.</title>
        <authorList>
            <person name="Hausmann S."/>
            <person name="Zheng S."/>
            <person name="Costanzo M."/>
            <person name="Brost R.L."/>
            <person name="Garcin D."/>
            <person name="Boone C."/>
            <person name="Shuman S."/>
            <person name="Schwer B."/>
        </authorList>
    </citation>
    <scope>FUNCTION</scope>
    <scope>CATALYTIC ACTIVITY</scope>
</reference>
<reference key="9">
    <citation type="journal article" date="2008" name="J. Cell Sci.">
        <title>Hypermethylation of yeast telomerase RNA by the snRNA and snoRNA methyltransferase Tgs1.</title>
        <authorList>
            <person name="Franke J."/>
            <person name="Gehlen J."/>
            <person name="Ehrenhofer-Murray A.E."/>
        </authorList>
    </citation>
    <scope>FUNCTION</scope>
    <scope>MUTAGENESIS OF TRP-178</scope>
</reference>
<proteinExistence type="evidence at protein level"/>
<organism>
    <name type="scientific">Saccharomyces cerevisiae (strain ATCC 204508 / S288c)</name>
    <name type="common">Baker's yeast</name>
    <dbReference type="NCBI Taxonomy" id="559292"/>
    <lineage>
        <taxon>Eukaryota</taxon>
        <taxon>Fungi</taxon>
        <taxon>Dikarya</taxon>
        <taxon>Ascomycota</taxon>
        <taxon>Saccharomycotina</taxon>
        <taxon>Saccharomycetes</taxon>
        <taxon>Saccharomycetales</taxon>
        <taxon>Saccharomycetaceae</taxon>
        <taxon>Saccharomyces</taxon>
    </lineage>
</organism>
<protein>
    <recommendedName>
        <fullName>Trimethylguanosine synthase</fullName>
        <ecNumber evidence="7">2.1.1.-</ecNumber>
    </recommendedName>
    <alternativeName>
        <fullName>Cap-specific guanine-N(2) methyltransferase</fullName>
    </alternativeName>
    <alternativeName>
        <fullName>snRNA/snoRNA cap hypermethylase</fullName>
    </alternativeName>
</protein>
<accession>Q12052</accession>
<accession>D6W3L1</accession>
<keyword id="KW-0489">Methyltransferase</keyword>
<keyword id="KW-0539">Nucleus</keyword>
<keyword id="KW-1185">Reference proteome</keyword>
<keyword id="KW-0949">S-adenosyl-L-methionine</keyword>
<keyword id="KW-0808">Transferase</keyword>
<gene>
    <name type="primary">TGS1</name>
    <name type="ordered locus">YPL157W</name>
    <name type="ORF">P2573</name>
</gene>
<dbReference type="EC" id="2.1.1.-" evidence="7"/>
<dbReference type="EMBL" id="X96770">
    <property type="protein sequence ID" value="CAA65564.1"/>
    <property type="molecule type" value="Genomic_DNA"/>
</dbReference>
<dbReference type="EMBL" id="Z73513">
    <property type="protein sequence ID" value="CAA97862.1"/>
    <property type="molecule type" value="Genomic_DNA"/>
</dbReference>
<dbReference type="EMBL" id="BK006949">
    <property type="protein sequence ID" value="DAA11277.1"/>
    <property type="molecule type" value="Genomic_DNA"/>
</dbReference>
<dbReference type="PIR" id="S65168">
    <property type="entry name" value="S65168"/>
</dbReference>
<dbReference type="RefSeq" id="NP_015168.1">
    <property type="nucleotide sequence ID" value="NM_001183971.1"/>
</dbReference>
<dbReference type="SMR" id="Q12052"/>
<dbReference type="BioGRID" id="36026">
    <property type="interactions" value="506"/>
</dbReference>
<dbReference type="DIP" id="DIP-1974N"/>
<dbReference type="FunCoup" id="Q12052">
    <property type="interactions" value="183"/>
</dbReference>
<dbReference type="IntAct" id="Q12052">
    <property type="interactions" value="6"/>
</dbReference>
<dbReference type="MINT" id="Q12052"/>
<dbReference type="STRING" id="4932.YPL157W"/>
<dbReference type="iPTMnet" id="Q12052"/>
<dbReference type="PaxDb" id="4932-YPL157W"/>
<dbReference type="PeptideAtlas" id="Q12052"/>
<dbReference type="EnsemblFungi" id="YPL157W_mRNA">
    <property type="protein sequence ID" value="YPL157W"/>
    <property type="gene ID" value="YPL157W"/>
</dbReference>
<dbReference type="GeneID" id="855946"/>
<dbReference type="KEGG" id="sce:YPL157W"/>
<dbReference type="AGR" id="SGD:S000006078"/>
<dbReference type="SGD" id="S000006078">
    <property type="gene designation" value="TGS1"/>
</dbReference>
<dbReference type="VEuPathDB" id="FungiDB:YPL157W"/>
<dbReference type="eggNOG" id="KOG2730">
    <property type="taxonomic scope" value="Eukaryota"/>
</dbReference>
<dbReference type="GeneTree" id="ENSGT00390000018056"/>
<dbReference type="HOGENOM" id="CLU_029658_2_0_1"/>
<dbReference type="InParanoid" id="Q12052"/>
<dbReference type="OMA" id="KALCIYY"/>
<dbReference type="OrthoDB" id="194443at2759"/>
<dbReference type="BioCyc" id="YEAST:G3O-34053-MONOMER"/>
<dbReference type="BRENDA" id="2.3.1.221">
    <property type="organism ID" value="530"/>
</dbReference>
<dbReference type="BioGRID-ORCS" id="855946">
    <property type="hits" value="8 hits in 10 CRISPR screens"/>
</dbReference>
<dbReference type="PRO" id="PR:Q12052"/>
<dbReference type="Proteomes" id="UP000002311">
    <property type="component" value="Chromosome XVI"/>
</dbReference>
<dbReference type="RNAct" id="Q12052">
    <property type="molecule type" value="protein"/>
</dbReference>
<dbReference type="GO" id="GO:0005730">
    <property type="term" value="C:nucleolus"/>
    <property type="evidence" value="ECO:0000314"/>
    <property type="project" value="SGD"/>
</dbReference>
<dbReference type="GO" id="GO:0005634">
    <property type="term" value="C:nucleus"/>
    <property type="evidence" value="ECO:0000318"/>
    <property type="project" value="GO_Central"/>
</dbReference>
<dbReference type="GO" id="GO:0071164">
    <property type="term" value="F:RNA cap trimethylguanosine synthase activity"/>
    <property type="evidence" value="ECO:0000318"/>
    <property type="project" value="GO_Central"/>
</dbReference>
<dbReference type="GO" id="GO:0008173">
    <property type="term" value="F:RNA methyltransferase activity"/>
    <property type="evidence" value="ECO:0000315"/>
    <property type="project" value="SGD"/>
</dbReference>
<dbReference type="GO" id="GO:0036261">
    <property type="term" value="P:7-methylguanosine cap hypermethylation"/>
    <property type="evidence" value="ECO:0000315"/>
    <property type="project" value="SGD"/>
</dbReference>
<dbReference type="GO" id="GO:0051321">
    <property type="term" value="P:meiotic cell cycle"/>
    <property type="evidence" value="ECO:0000315"/>
    <property type="project" value="SGD"/>
</dbReference>
<dbReference type="GO" id="GO:0017126">
    <property type="term" value="P:nucleologenesis"/>
    <property type="evidence" value="ECO:0000315"/>
    <property type="project" value="SGD"/>
</dbReference>
<dbReference type="GO" id="GO:0032210">
    <property type="term" value="P:regulation of telomere maintenance via telomerase"/>
    <property type="evidence" value="ECO:0000315"/>
    <property type="project" value="SGD"/>
</dbReference>
<dbReference type="GO" id="GO:0001510">
    <property type="term" value="P:RNA methylation"/>
    <property type="evidence" value="ECO:0000315"/>
    <property type="project" value="SGD"/>
</dbReference>
<dbReference type="GO" id="GO:0008033">
    <property type="term" value="P:tRNA processing"/>
    <property type="evidence" value="ECO:0000315"/>
    <property type="project" value="SGD"/>
</dbReference>
<dbReference type="CDD" id="cd02440">
    <property type="entry name" value="AdoMet_MTases"/>
    <property type="match status" value="1"/>
</dbReference>
<dbReference type="FunFam" id="3.40.50.150:FF:000330">
    <property type="entry name" value="Trimethylguanosine synthase"/>
    <property type="match status" value="1"/>
</dbReference>
<dbReference type="Gene3D" id="3.40.50.150">
    <property type="entry name" value="Vaccinia Virus protein VP39"/>
    <property type="match status" value="1"/>
</dbReference>
<dbReference type="InterPro" id="IPR019012">
    <property type="entry name" value="RNA_cap_Gua-N2-MeTrfase"/>
</dbReference>
<dbReference type="InterPro" id="IPR029063">
    <property type="entry name" value="SAM-dependent_MTases_sf"/>
</dbReference>
<dbReference type="PANTHER" id="PTHR14741">
    <property type="entry name" value="S-ADENOSYLMETHIONINE-DEPENDENT METHYLTRANSFERASE RELATED"/>
    <property type="match status" value="1"/>
</dbReference>
<dbReference type="PANTHER" id="PTHR14741:SF32">
    <property type="entry name" value="TRIMETHYLGUANOSINE SYNTHASE"/>
    <property type="match status" value="1"/>
</dbReference>
<dbReference type="Pfam" id="PF09445">
    <property type="entry name" value="Methyltransf_15"/>
    <property type="match status" value="1"/>
</dbReference>
<dbReference type="SUPFAM" id="SSF53335">
    <property type="entry name" value="S-adenosyl-L-methionine-dependent methyltransferases"/>
    <property type="match status" value="1"/>
</dbReference>
<sequence>MGRTFIHASKIKHAARKRKHHSNFRTLIKLLNNDAYKIESSKPLKNGKLFKYWKNRRRLFSKIDSASIYMTDELWFSVTPERIACFLANFVKACMPNAERILDVFCGGGGNTIQFAMQFPYVYGVDYSIEHIYCTAKNAQSYGVDDRIWLKRGSWKKLVSKQKLSKIKYDCVFGSPPWGGPEYLRNDVYDLEQHLKPMGITKMLKSFLKLSPNVIMFLPRNSDLNQLSRATRKVLGPFAKCKVLYVKENGYMKGIFCMWGECFFNYEPASTENSRRESSEKEELSSENEELSKRKKHESTTTTKDNTVDIYDVNG</sequence>